<dbReference type="EMBL" id="BA000021">
    <property type="protein sequence ID" value="BAC24706.1"/>
    <property type="molecule type" value="Genomic_DNA"/>
</dbReference>
<dbReference type="SMR" id="Q8D1Z5"/>
<dbReference type="STRING" id="36870.gene:10369069"/>
<dbReference type="KEGG" id="wbr:rpsE"/>
<dbReference type="eggNOG" id="COG0098">
    <property type="taxonomic scope" value="Bacteria"/>
</dbReference>
<dbReference type="HOGENOM" id="CLU_065898_2_2_6"/>
<dbReference type="OrthoDB" id="9809045at2"/>
<dbReference type="Proteomes" id="UP000000562">
    <property type="component" value="Chromosome"/>
</dbReference>
<dbReference type="GO" id="GO:0015935">
    <property type="term" value="C:small ribosomal subunit"/>
    <property type="evidence" value="ECO:0007669"/>
    <property type="project" value="InterPro"/>
</dbReference>
<dbReference type="GO" id="GO:0019843">
    <property type="term" value="F:rRNA binding"/>
    <property type="evidence" value="ECO:0007669"/>
    <property type="project" value="UniProtKB-UniRule"/>
</dbReference>
<dbReference type="GO" id="GO:0003735">
    <property type="term" value="F:structural constituent of ribosome"/>
    <property type="evidence" value="ECO:0007669"/>
    <property type="project" value="InterPro"/>
</dbReference>
<dbReference type="GO" id="GO:0006412">
    <property type="term" value="P:translation"/>
    <property type="evidence" value="ECO:0007669"/>
    <property type="project" value="UniProtKB-UniRule"/>
</dbReference>
<dbReference type="FunFam" id="3.30.160.20:FF:000001">
    <property type="entry name" value="30S ribosomal protein S5"/>
    <property type="match status" value="1"/>
</dbReference>
<dbReference type="FunFam" id="3.30.230.10:FF:000002">
    <property type="entry name" value="30S ribosomal protein S5"/>
    <property type="match status" value="1"/>
</dbReference>
<dbReference type="Gene3D" id="3.30.160.20">
    <property type="match status" value="1"/>
</dbReference>
<dbReference type="Gene3D" id="3.30.230.10">
    <property type="match status" value="1"/>
</dbReference>
<dbReference type="HAMAP" id="MF_01307_B">
    <property type="entry name" value="Ribosomal_uS5_B"/>
    <property type="match status" value="1"/>
</dbReference>
<dbReference type="InterPro" id="IPR020568">
    <property type="entry name" value="Ribosomal_Su5_D2-typ_SF"/>
</dbReference>
<dbReference type="InterPro" id="IPR000851">
    <property type="entry name" value="Ribosomal_uS5"/>
</dbReference>
<dbReference type="InterPro" id="IPR005712">
    <property type="entry name" value="Ribosomal_uS5_bac-type"/>
</dbReference>
<dbReference type="InterPro" id="IPR005324">
    <property type="entry name" value="Ribosomal_uS5_C"/>
</dbReference>
<dbReference type="InterPro" id="IPR013810">
    <property type="entry name" value="Ribosomal_uS5_N"/>
</dbReference>
<dbReference type="InterPro" id="IPR018192">
    <property type="entry name" value="Ribosomal_uS5_N_CS"/>
</dbReference>
<dbReference type="InterPro" id="IPR014721">
    <property type="entry name" value="Ribsml_uS5_D2-typ_fold_subgr"/>
</dbReference>
<dbReference type="NCBIfam" id="TIGR01021">
    <property type="entry name" value="rpsE_bact"/>
    <property type="match status" value="1"/>
</dbReference>
<dbReference type="PANTHER" id="PTHR48277">
    <property type="entry name" value="MITOCHONDRIAL RIBOSOMAL PROTEIN S5"/>
    <property type="match status" value="1"/>
</dbReference>
<dbReference type="PANTHER" id="PTHR48277:SF1">
    <property type="entry name" value="MITOCHONDRIAL RIBOSOMAL PROTEIN S5"/>
    <property type="match status" value="1"/>
</dbReference>
<dbReference type="Pfam" id="PF00333">
    <property type="entry name" value="Ribosomal_S5"/>
    <property type="match status" value="1"/>
</dbReference>
<dbReference type="Pfam" id="PF03719">
    <property type="entry name" value="Ribosomal_S5_C"/>
    <property type="match status" value="1"/>
</dbReference>
<dbReference type="SUPFAM" id="SSF54768">
    <property type="entry name" value="dsRNA-binding domain-like"/>
    <property type="match status" value="1"/>
</dbReference>
<dbReference type="SUPFAM" id="SSF54211">
    <property type="entry name" value="Ribosomal protein S5 domain 2-like"/>
    <property type="match status" value="1"/>
</dbReference>
<dbReference type="PROSITE" id="PS00585">
    <property type="entry name" value="RIBOSOMAL_S5"/>
    <property type="match status" value="1"/>
</dbReference>
<dbReference type="PROSITE" id="PS50881">
    <property type="entry name" value="S5_DSRBD"/>
    <property type="match status" value="1"/>
</dbReference>
<comment type="function">
    <text evidence="1">With S4 and S12 plays an important role in translational accuracy.</text>
</comment>
<comment type="function">
    <text evidence="1">Located at the back of the 30S subunit body where it stabilizes the conformation of the head with respect to the body.</text>
</comment>
<comment type="subunit">
    <text evidence="1">Part of the 30S ribosomal subunit. Contacts proteins S4 and S8.</text>
</comment>
<comment type="domain">
    <text>The N-terminal domain interacts with the head of the 30S subunit; the C-terminal domain interacts with the body and contacts protein S4. The interaction surface between S4 and S5 is involved in control of translational fidelity.</text>
</comment>
<comment type="similarity">
    <text evidence="1">Belongs to the universal ribosomal protein uS5 family.</text>
</comment>
<sequence length="166" mass="18038">MVNFEKNINELQEKLISVNRVSKTVKGGRIFSFTALTVVGDCQGKIGFGYGKSKEVPLAIQKAMDKARKNMIIIPIVCKTLQHEINGYHTGSRVFMKPASEGTGIIAGGAMRAVLEVAGVHNVLAKVYGSTNPINVVRATVNALKKMRFPMHIAEKRGKSIDDILG</sequence>
<gene>
    <name evidence="1" type="primary">rpsE</name>
    <name type="ordered locus">WIGBR5600</name>
</gene>
<proteinExistence type="inferred from homology"/>
<name>RS5_WIGBR</name>
<protein>
    <recommendedName>
        <fullName evidence="1">Small ribosomal subunit protein uS5</fullName>
    </recommendedName>
    <alternativeName>
        <fullName evidence="2">30S ribosomal protein S5</fullName>
    </alternativeName>
</protein>
<feature type="chain" id="PRO_0000131633" description="Small ribosomal subunit protein uS5">
    <location>
        <begin position="1"/>
        <end position="166"/>
    </location>
</feature>
<feature type="domain" description="S5 DRBM" evidence="1">
    <location>
        <begin position="11"/>
        <end position="74"/>
    </location>
</feature>
<accession>Q8D1Z5</accession>
<evidence type="ECO:0000255" key="1">
    <source>
        <dbReference type="HAMAP-Rule" id="MF_01307"/>
    </source>
</evidence>
<evidence type="ECO:0000305" key="2"/>
<reference key="1">
    <citation type="journal article" date="2002" name="Nat. Genet.">
        <title>Genome sequence of the endocellular obligate symbiont of tsetse flies, Wigglesworthia glossinidia.</title>
        <authorList>
            <person name="Akman L."/>
            <person name="Yamashita A."/>
            <person name="Watanabe H."/>
            <person name="Oshima K."/>
            <person name="Shiba T."/>
            <person name="Hattori M."/>
            <person name="Aksoy S."/>
        </authorList>
    </citation>
    <scope>NUCLEOTIDE SEQUENCE [LARGE SCALE GENOMIC DNA]</scope>
</reference>
<keyword id="KW-1185">Reference proteome</keyword>
<keyword id="KW-0687">Ribonucleoprotein</keyword>
<keyword id="KW-0689">Ribosomal protein</keyword>
<keyword id="KW-0694">RNA-binding</keyword>
<keyword id="KW-0699">rRNA-binding</keyword>
<organism>
    <name type="scientific">Wigglesworthia glossinidia brevipalpis</name>
    <dbReference type="NCBI Taxonomy" id="36870"/>
    <lineage>
        <taxon>Bacteria</taxon>
        <taxon>Pseudomonadati</taxon>
        <taxon>Pseudomonadota</taxon>
        <taxon>Gammaproteobacteria</taxon>
        <taxon>Enterobacterales</taxon>
        <taxon>Erwiniaceae</taxon>
        <taxon>Wigglesworthia</taxon>
    </lineage>
</organism>